<comment type="function">
    <text evidence="2">Meiosis-specific cyclin. Required for normal homolog synapsis and recombination in early to mid-prophase 1. May regulate the timing of sister chromatid separation.</text>
</comment>
<comment type="subunit">
    <text>May interact with CDKA-1 and CDKB1-1.</text>
</comment>
<comment type="alternative products">
    <event type="alternative splicing"/>
    <isoform>
        <id>Q1PFW3-1</id>
        <name>1</name>
        <sequence type="displayed"/>
    </isoform>
    <isoform>
        <id>Q1PFW3-2</id>
        <name>2</name>
        <sequence type="described" ref="VSP_025289"/>
    </isoform>
</comment>
<comment type="developmental stage">
    <text evidence="2">Expressed during male meiosis specifically in male meiotic cells (male meiocytes within anther locules). Expressed during female meiosis specifically in the female meiocytes within the ovule.</text>
</comment>
<comment type="disruption phenotype">
    <text evidence="2">Plants exhibit a severe defect in homolog synapsis recombination and bivalent formation in prophase 1, resulting in random chromosome distribution and formation of abnormal meiotic products.</text>
</comment>
<comment type="similarity">
    <text evidence="4">Belongs to the cyclin family.</text>
</comment>
<comment type="sequence caution" evidence="4">
    <conflict type="erroneous gene model prediction">
        <sequence resource="EMBL-CDS" id="AAF79244"/>
    </conflict>
</comment>
<keyword id="KW-0025">Alternative splicing</keyword>
<keyword id="KW-0131">Cell cycle</keyword>
<keyword id="KW-0132">Cell division</keyword>
<keyword id="KW-0195">Cyclin</keyword>
<keyword id="KW-0469">Meiosis</keyword>
<keyword id="KW-1185">Reference proteome</keyword>
<reference key="1">
    <citation type="journal article" date="2002" name="EMBO J.">
        <title>Homolog interaction during meiotic prophase I in Arabidopsis requires the SOLO DANCERS gene encoding a novel cyclin-like protein.</title>
        <authorList>
            <person name="Azumi Y."/>
            <person name="Liu D."/>
            <person name="Zhao D."/>
            <person name="Li W."/>
            <person name="Wang G."/>
            <person name="Hu Y."/>
            <person name="Ma H."/>
        </authorList>
    </citation>
    <scope>NUCLEOTIDE SEQUENCE [MRNA] (ISOFORM 1)</scope>
    <scope>FUNCTION</scope>
    <scope>DEVELOPMENTAL STAGE</scope>
    <scope>INTERACTION WITH CDKA-1 AND CDKB1-1</scope>
    <scope>DISRUPTION PHENOTYPE</scope>
</reference>
<reference key="2">
    <citation type="journal article" date="2000" name="Nature">
        <title>Sequence and analysis of chromosome 1 of the plant Arabidopsis thaliana.</title>
        <authorList>
            <person name="Theologis A."/>
            <person name="Ecker J.R."/>
            <person name="Palm C.J."/>
            <person name="Federspiel N.A."/>
            <person name="Kaul S."/>
            <person name="White O."/>
            <person name="Alonso J."/>
            <person name="Altafi H."/>
            <person name="Araujo R."/>
            <person name="Bowman C.L."/>
            <person name="Brooks S.Y."/>
            <person name="Buehler E."/>
            <person name="Chan A."/>
            <person name="Chao Q."/>
            <person name="Chen H."/>
            <person name="Cheuk R.F."/>
            <person name="Chin C.W."/>
            <person name="Chung M.K."/>
            <person name="Conn L."/>
            <person name="Conway A.B."/>
            <person name="Conway A.R."/>
            <person name="Creasy T.H."/>
            <person name="Dewar K."/>
            <person name="Dunn P."/>
            <person name="Etgu P."/>
            <person name="Feldblyum T.V."/>
            <person name="Feng J.-D."/>
            <person name="Fong B."/>
            <person name="Fujii C.Y."/>
            <person name="Gill J.E."/>
            <person name="Goldsmith A.D."/>
            <person name="Haas B."/>
            <person name="Hansen N.F."/>
            <person name="Hughes B."/>
            <person name="Huizar L."/>
            <person name="Hunter J.L."/>
            <person name="Jenkins J."/>
            <person name="Johnson-Hopson C."/>
            <person name="Khan S."/>
            <person name="Khaykin E."/>
            <person name="Kim C.J."/>
            <person name="Koo H.L."/>
            <person name="Kremenetskaia I."/>
            <person name="Kurtz D.B."/>
            <person name="Kwan A."/>
            <person name="Lam B."/>
            <person name="Langin-Hooper S."/>
            <person name="Lee A."/>
            <person name="Lee J.M."/>
            <person name="Lenz C.A."/>
            <person name="Li J.H."/>
            <person name="Li Y.-P."/>
            <person name="Lin X."/>
            <person name="Liu S.X."/>
            <person name="Liu Z.A."/>
            <person name="Luros J.S."/>
            <person name="Maiti R."/>
            <person name="Marziali A."/>
            <person name="Militscher J."/>
            <person name="Miranda M."/>
            <person name="Nguyen M."/>
            <person name="Nierman W.C."/>
            <person name="Osborne B.I."/>
            <person name="Pai G."/>
            <person name="Peterson J."/>
            <person name="Pham P.K."/>
            <person name="Rizzo M."/>
            <person name="Rooney T."/>
            <person name="Rowley D."/>
            <person name="Sakano H."/>
            <person name="Salzberg S.L."/>
            <person name="Schwartz J.R."/>
            <person name="Shinn P."/>
            <person name="Southwick A.M."/>
            <person name="Sun H."/>
            <person name="Tallon L.J."/>
            <person name="Tambunga G."/>
            <person name="Toriumi M.J."/>
            <person name="Town C.D."/>
            <person name="Utterback T."/>
            <person name="Van Aken S."/>
            <person name="Vaysberg M."/>
            <person name="Vysotskaia V.S."/>
            <person name="Walker M."/>
            <person name="Wu D."/>
            <person name="Yu G."/>
            <person name="Fraser C.M."/>
            <person name="Venter J.C."/>
            <person name="Davis R.W."/>
        </authorList>
    </citation>
    <scope>NUCLEOTIDE SEQUENCE [LARGE SCALE GENOMIC DNA]</scope>
    <source>
        <strain>cv. Columbia</strain>
    </source>
</reference>
<reference key="3">
    <citation type="journal article" date="2017" name="Plant J.">
        <title>Araport11: a complete reannotation of the Arabidopsis thaliana reference genome.</title>
        <authorList>
            <person name="Cheng C.Y."/>
            <person name="Krishnakumar V."/>
            <person name="Chan A.P."/>
            <person name="Thibaud-Nissen F."/>
            <person name="Schobel S."/>
            <person name="Town C.D."/>
        </authorList>
    </citation>
    <scope>GENOME REANNOTATION</scope>
    <source>
        <strain>cv. Columbia</strain>
    </source>
</reference>
<reference key="4">
    <citation type="journal article" date="2006" name="Plant Biotechnol. J.">
        <title>Simultaneous high-throughput recombinational cloning of open reading frames in closed and open configurations.</title>
        <authorList>
            <person name="Underwood B.A."/>
            <person name="Vanderhaeghen R."/>
            <person name="Whitford R."/>
            <person name="Town C.D."/>
            <person name="Hilson P."/>
        </authorList>
    </citation>
    <scope>NUCLEOTIDE SEQUENCE [LARGE SCALE MRNA] (ISOFORM 2)</scope>
    <source>
        <strain>cv. Columbia</strain>
    </source>
</reference>
<reference key="5">
    <citation type="journal article" date="2004" name="Plant Physiol.">
        <title>Genome-wide analysis of the cyclin family in Arabidopsis and comparative phylogenetic analysis of plant cyclin-like proteins.</title>
        <authorList>
            <person name="Wang G."/>
            <person name="Kong H."/>
            <person name="Sun Y."/>
            <person name="Zhang X."/>
            <person name="Zhang W."/>
            <person name="Altman N."/>
            <person name="dePamphilis C.W."/>
            <person name="Ma H."/>
        </authorList>
    </citation>
    <scope>GENE FAMILY</scope>
    <scope>NOMENCLATURE</scope>
</reference>
<sequence>MKEIAMRNSKRKPEPTPFAGKKLRSTRLRRKRAQISPVLVQSPLWSKQIGVSAASVDSCSDLLADDNVSCGSSRVEKSSNPKKTLIEEVEVSKPGYNVKETIGDSKFRRITRSYSKLHKEKEGDEIEVSESSCVDSNSGAGLRRLNVKGNKINDNDEISFSRSDVTFAGHVSNSRSLNFESENKESDVVSVISGVEYCSKFGSVTGGADNEEIEISKPSSFVEADSSLGSAKELKPELEIVGCVSDLACSEKFSEEVSDSLDDESSEQRSEIYSQYSDFDYSDYTPSIFFDSGSEFSEKSSSDSPISHSRSLYLQFKEQFCRSTIPNDFGSSCEEEIHSELLRFDDEEVEESYLRLRERERSHAYMRDCAKAYCSRMDNTGLIPRLRSIMVQWIVKQCSDMGLQQETLFLGVGLLDRFLSKGSFKSERTLILVGIASLTLATRIEENQPYNSIRKRNFTIQNLRYSRHEVVAMEWLVQEVLNFKCFTPTIFNFLWFYLKAARANPEVERKAKSLAVTSLSDQTQLCFWPSTVAAALVVLACIEHNKISAYQRVIKVHVRTTDNELPECVKSLDWLLGQ</sequence>
<evidence type="ECO:0000256" key="1">
    <source>
        <dbReference type="SAM" id="MobiDB-lite"/>
    </source>
</evidence>
<evidence type="ECO:0000269" key="2">
    <source>
    </source>
</evidence>
<evidence type="ECO:0000303" key="3">
    <source>
    </source>
</evidence>
<evidence type="ECO:0000305" key="4"/>
<accession>Q1PFW3</accession>
<accession>Q8RYC7</accession>
<accession>Q9LQV6</accession>
<protein>
    <recommendedName>
        <fullName>Cyclin-SDS</fullName>
    </recommendedName>
    <alternativeName>
        <fullName>Protein SOLO DANCERS</fullName>
    </alternativeName>
</protein>
<organism>
    <name type="scientific">Arabidopsis thaliana</name>
    <name type="common">Mouse-ear cress</name>
    <dbReference type="NCBI Taxonomy" id="3702"/>
    <lineage>
        <taxon>Eukaryota</taxon>
        <taxon>Viridiplantae</taxon>
        <taxon>Streptophyta</taxon>
        <taxon>Embryophyta</taxon>
        <taxon>Tracheophyta</taxon>
        <taxon>Spermatophyta</taxon>
        <taxon>Magnoliopsida</taxon>
        <taxon>eudicotyledons</taxon>
        <taxon>Gunneridae</taxon>
        <taxon>Pentapetalae</taxon>
        <taxon>rosids</taxon>
        <taxon>malvids</taxon>
        <taxon>Brassicales</taxon>
        <taxon>Brassicaceae</taxon>
        <taxon>Camelineae</taxon>
        <taxon>Arabidopsis</taxon>
    </lineage>
</organism>
<proteinExistence type="evidence at protein level"/>
<gene>
    <name type="primary">SDS</name>
    <name type="ordered locus">At1g14750</name>
    <name type="ORF">F10B6.15</name>
</gene>
<feature type="chain" id="PRO_0000287062" description="Cyclin-SDS">
    <location>
        <begin position="1"/>
        <end position="578"/>
    </location>
</feature>
<feature type="region of interest" description="Disordered" evidence="1">
    <location>
        <begin position="1"/>
        <end position="31"/>
    </location>
</feature>
<feature type="compositionally biased region" description="Basic residues" evidence="1">
    <location>
        <begin position="21"/>
        <end position="31"/>
    </location>
</feature>
<feature type="splice variant" id="VSP_025289" description="In isoform 2." evidence="3">
    <location>
        <begin position="90"/>
        <end position="257"/>
    </location>
</feature>
<dbReference type="EMBL" id="AJ457977">
    <property type="protein sequence ID" value="CAD30003.1"/>
    <property type="molecule type" value="mRNA"/>
</dbReference>
<dbReference type="EMBL" id="AC006917">
    <property type="protein sequence ID" value="AAF79244.1"/>
    <property type="status" value="ALT_SEQ"/>
    <property type="molecule type" value="Genomic_DNA"/>
</dbReference>
<dbReference type="EMBL" id="CP002684">
    <property type="protein sequence ID" value="AEE29217.1"/>
    <property type="molecule type" value="Genomic_DNA"/>
</dbReference>
<dbReference type="EMBL" id="CP002684">
    <property type="protein sequence ID" value="AEE29218.1"/>
    <property type="molecule type" value="Genomic_DNA"/>
</dbReference>
<dbReference type="EMBL" id="DQ446250">
    <property type="protein sequence ID" value="ABE65620.1"/>
    <property type="molecule type" value="mRNA"/>
</dbReference>
<dbReference type="RefSeq" id="NP_001077539.1">
    <molecule id="Q1PFW3-2"/>
    <property type="nucleotide sequence ID" value="NM_001084070.2"/>
</dbReference>
<dbReference type="RefSeq" id="NP_172928.2">
    <molecule id="Q1PFW3-1"/>
    <property type="nucleotide sequence ID" value="NM_101344.3"/>
</dbReference>
<dbReference type="SMR" id="Q1PFW3"/>
<dbReference type="FunCoup" id="Q1PFW3">
    <property type="interactions" value="719"/>
</dbReference>
<dbReference type="IntAct" id="Q1PFW3">
    <property type="interactions" value="2"/>
</dbReference>
<dbReference type="STRING" id="3702.Q1PFW3"/>
<dbReference type="PaxDb" id="3702-AT1G14750.1"/>
<dbReference type="EnsemblPlants" id="AT1G14750.1">
    <molecule id="Q1PFW3-1"/>
    <property type="protein sequence ID" value="AT1G14750.1"/>
    <property type="gene ID" value="AT1G14750"/>
</dbReference>
<dbReference type="EnsemblPlants" id="AT1G14750.2">
    <molecule id="Q1PFW3-2"/>
    <property type="protein sequence ID" value="AT1G14750.2"/>
    <property type="gene ID" value="AT1G14750"/>
</dbReference>
<dbReference type="GeneID" id="838040"/>
<dbReference type="Gramene" id="AT1G14750.1">
    <molecule id="Q1PFW3-1"/>
    <property type="protein sequence ID" value="AT1G14750.1"/>
    <property type="gene ID" value="AT1G14750"/>
</dbReference>
<dbReference type="Gramene" id="AT1G14750.2">
    <molecule id="Q1PFW3-2"/>
    <property type="protein sequence ID" value="AT1G14750.2"/>
    <property type="gene ID" value="AT1G14750"/>
</dbReference>
<dbReference type="KEGG" id="ath:AT1G14750"/>
<dbReference type="Araport" id="AT1G14750"/>
<dbReference type="TAIR" id="AT1G14750">
    <property type="gene designation" value="SDS"/>
</dbReference>
<dbReference type="eggNOG" id="KOG0653">
    <property type="taxonomic scope" value="Eukaryota"/>
</dbReference>
<dbReference type="InParanoid" id="Q1PFW3"/>
<dbReference type="OMA" id="DHKHLSF"/>
<dbReference type="OrthoDB" id="5590282at2759"/>
<dbReference type="PhylomeDB" id="Q1PFW3"/>
<dbReference type="PRO" id="PR:Q1PFW3"/>
<dbReference type="Proteomes" id="UP000006548">
    <property type="component" value="Chromosome 1"/>
</dbReference>
<dbReference type="ExpressionAtlas" id="Q1PFW3">
    <property type="expression patterns" value="baseline and differential"/>
</dbReference>
<dbReference type="GO" id="GO:0051301">
    <property type="term" value="P:cell division"/>
    <property type="evidence" value="ECO:0007669"/>
    <property type="project" value="UniProtKB-KW"/>
</dbReference>
<dbReference type="GO" id="GO:0051026">
    <property type="term" value="P:chiasma assembly"/>
    <property type="evidence" value="ECO:0000315"/>
    <property type="project" value="TAIR"/>
</dbReference>
<dbReference type="GO" id="GO:0000724">
    <property type="term" value="P:double-strand break repair via homologous recombination"/>
    <property type="evidence" value="ECO:0000315"/>
    <property type="project" value="TAIR"/>
</dbReference>
<dbReference type="CDD" id="cd20721">
    <property type="entry name" value="CYCLIN_SDS-like_rpt2"/>
    <property type="match status" value="1"/>
</dbReference>
<dbReference type="FunFam" id="1.10.472.10:FF:000100">
    <property type="entry name" value="Cyclin-SDS"/>
    <property type="match status" value="1"/>
</dbReference>
<dbReference type="Gene3D" id="1.10.472.10">
    <property type="entry name" value="Cyclin-like"/>
    <property type="match status" value="2"/>
</dbReference>
<dbReference type="InterPro" id="IPR039361">
    <property type="entry name" value="Cyclin"/>
</dbReference>
<dbReference type="InterPro" id="IPR013763">
    <property type="entry name" value="Cyclin-like_dom"/>
</dbReference>
<dbReference type="InterPro" id="IPR036915">
    <property type="entry name" value="Cyclin-like_sf"/>
</dbReference>
<dbReference type="InterPro" id="IPR004367">
    <property type="entry name" value="Cyclin_C-dom"/>
</dbReference>
<dbReference type="InterPro" id="IPR006671">
    <property type="entry name" value="Cyclin_N"/>
</dbReference>
<dbReference type="InterPro" id="IPR048258">
    <property type="entry name" value="Cyclins_cyclin-box"/>
</dbReference>
<dbReference type="PANTHER" id="PTHR10177">
    <property type="entry name" value="CYCLINS"/>
    <property type="match status" value="1"/>
</dbReference>
<dbReference type="Pfam" id="PF02984">
    <property type="entry name" value="Cyclin_C"/>
    <property type="match status" value="1"/>
</dbReference>
<dbReference type="Pfam" id="PF00134">
    <property type="entry name" value="Cyclin_N"/>
    <property type="match status" value="1"/>
</dbReference>
<dbReference type="SMART" id="SM00385">
    <property type="entry name" value="CYCLIN"/>
    <property type="match status" value="1"/>
</dbReference>
<dbReference type="SUPFAM" id="SSF47954">
    <property type="entry name" value="Cyclin-like"/>
    <property type="match status" value="2"/>
</dbReference>
<dbReference type="PROSITE" id="PS00292">
    <property type="entry name" value="CYCLINS"/>
    <property type="match status" value="1"/>
</dbReference>
<name>CCSDS_ARATH</name>